<gene>
    <name type="primary">PLP6</name>
    <name type="ordered locus">At2g39220</name>
    <name type="ORF">T16B24.14</name>
</gene>
<comment type="function">
    <text evidence="1">Possesses non-specific lipolytic acyl hydrolase (LAH) activity. Hydrolyzes phospholipids as well as galactolipids. May play a role in disease resistance (By similarity).</text>
</comment>
<comment type="interaction">
    <interactant intactId="EBI-25515433">
        <id>O80959</id>
    </interactant>
    <interactant intactId="EBI-2012188">
        <id>Q8RXD6</id>
        <label>HUB1</label>
    </interactant>
    <organismsDiffer>false</organismsDiffer>
    <experiments>3</experiments>
</comment>
<comment type="tissue specificity">
    <text evidence="4">Highly expressed in siliques and at lower levels in roots and flowers.</text>
</comment>
<comment type="domain">
    <text evidence="1">The nitrogen atoms of the two glycine residues in the GGXR motif define the oxyanion hole, and stabilize the oxyanion that forms during the nucleophilic attack by the catalytic serine during substrate cleavage.</text>
</comment>
<comment type="similarity">
    <text evidence="5">Belongs to the patatin family.</text>
</comment>
<reference key="1">
    <citation type="journal article" date="1999" name="Nature">
        <title>Sequence and analysis of chromosome 2 of the plant Arabidopsis thaliana.</title>
        <authorList>
            <person name="Lin X."/>
            <person name="Kaul S."/>
            <person name="Rounsley S.D."/>
            <person name="Shea T.P."/>
            <person name="Benito M.-I."/>
            <person name="Town C.D."/>
            <person name="Fujii C.Y."/>
            <person name="Mason T.M."/>
            <person name="Bowman C.L."/>
            <person name="Barnstead M.E."/>
            <person name="Feldblyum T.V."/>
            <person name="Buell C.R."/>
            <person name="Ketchum K.A."/>
            <person name="Lee J.J."/>
            <person name="Ronning C.M."/>
            <person name="Koo H.L."/>
            <person name="Moffat K.S."/>
            <person name="Cronin L.A."/>
            <person name="Shen M."/>
            <person name="Pai G."/>
            <person name="Van Aken S."/>
            <person name="Umayam L."/>
            <person name="Tallon L.J."/>
            <person name="Gill J.E."/>
            <person name="Adams M.D."/>
            <person name="Carrera A.J."/>
            <person name="Creasy T.H."/>
            <person name="Goodman H.M."/>
            <person name="Somerville C.R."/>
            <person name="Copenhaver G.P."/>
            <person name="Preuss D."/>
            <person name="Nierman W.C."/>
            <person name="White O."/>
            <person name="Eisen J.A."/>
            <person name="Salzberg S.L."/>
            <person name="Fraser C.M."/>
            <person name="Venter J.C."/>
        </authorList>
    </citation>
    <scope>NUCLEOTIDE SEQUENCE [LARGE SCALE GENOMIC DNA]</scope>
    <source>
        <strain>cv. Columbia</strain>
    </source>
</reference>
<reference key="2">
    <citation type="journal article" date="2017" name="Plant J.">
        <title>Araport11: a complete reannotation of the Arabidopsis thaliana reference genome.</title>
        <authorList>
            <person name="Cheng C.Y."/>
            <person name="Krishnakumar V."/>
            <person name="Chan A.P."/>
            <person name="Thibaud-Nissen F."/>
            <person name="Schobel S."/>
            <person name="Town C.D."/>
        </authorList>
    </citation>
    <scope>GENOME REANNOTATION</scope>
    <source>
        <strain>cv. Columbia</strain>
    </source>
</reference>
<reference key="3">
    <citation type="journal article" date="2003" name="Science">
        <title>Empirical analysis of transcriptional activity in the Arabidopsis genome.</title>
        <authorList>
            <person name="Yamada K."/>
            <person name="Lim J."/>
            <person name="Dale J.M."/>
            <person name="Chen H."/>
            <person name="Shinn P."/>
            <person name="Palm C.J."/>
            <person name="Southwick A.M."/>
            <person name="Wu H.C."/>
            <person name="Kim C.J."/>
            <person name="Nguyen M."/>
            <person name="Pham P.K."/>
            <person name="Cheuk R.F."/>
            <person name="Karlin-Newmann G."/>
            <person name="Liu S.X."/>
            <person name="Lam B."/>
            <person name="Sakano H."/>
            <person name="Wu T."/>
            <person name="Yu G."/>
            <person name="Miranda M."/>
            <person name="Quach H.L."/>
            <person name="Tripp M."/>
            <person name="Chang C.H."/>
            <person name="Lee J.M."/>
            <person name="Toriumi M.J."/>
            <person name="Chan M.M."/>
            <person name="Tang C.C."/>
            <person name="Onodera C.S."/>
            <person name="Deng J.M."/>
            <person name="Akiyama K."/>
            <person name="Ansari Y."/>
            <person name="Arakawa T."/>
            <person name="Banh J."/>
            <person name="Banno F."/>
            <person name="Bowser L."/>
            <person name="Brooks S.Y."/>
            <person name="Carninci P."/>
            <person name="Chao Q."/>
            <person name="Choy N."/>
            <person name="Enju A."/>
            <person name="Goldsmith A.D."/>
            <person name="Gurjal M."/>
            <person name="Hansen N.F."/>
            <person name="Hayashizaki Y."/>
            <person name="Johnson-Hopson C."/>
            <person name="Hsuan V.W."/>
            <person name="Iida K."/>
            <person name="Karnes M."/>
            <person name="Khan S."/>
            <person name="Koesema E."/>
            <person name="Ishida J."/>
            <person name="Jiang P.X."/>
            <person name="Jones T."/>
            <person name="Kawai J."/>
            <person name="Kamiya A."/>
            <person name="Meyers C."/>
            <person name="Nakajima M."/>
            <person name="Narusaka M."/>
            <person name="Seki M."/>
            <person name="Sakurai T."/>
            <person name="Satou M."/>
            <person name="Tamse R."/>
            <person name="Vaysberg M."/>
            <person name="Wallender E.K."/>
            <person name="Wong C."/>
            <person name="Yamamura Y."/>
            <person name="Yuan S."/>
            <person name="Shinozaki K."/>
            <person name="Davis R.W."/>
            <person name="Theologis A."/>
            <person name="Ecker J.R."/>
        </authorList>
    </citation>
    <scope>NUCLEOTIDE SEQUENCE [LARGE SCALE MRNA]</scope>
    <source>
        <strain>cv. Columbia</strain>
    </source>
</reference>
<reference key="4">
    <citation type="journal article" date="2011" name="Plant Cell">
        <title>Patatin-related phospholipase pPLAIIIbeta-induced changes in lipid metabolism alter cellulose content and cell elongation in Arabidopsis.</title>
        <authorList>
            <person name="Li M."/>
            <person name="Bahn S.C."/>
            <person name="Guo L."/>
            <person name="Musgrave W."/>
            <person name="Berg H."/>
            <person name="Welti R."/>
            <person name="Wang X."/>
        </authorList>
    </citation>
    <scope>TISSUE SPECIFICITY</scope>
</reference>
<organism>
    <name type="scientific">Arabidopsis thaliana</name>
    <name type="common">Mouse-ear cress</name>
    <dbReference type="NCBI Taxonomy" id="3702"/>
    <lineage>
        <taxon>Eukaryota</taxon>
        <taxon>Viridiplantae</taxon>
        <taxon>Streptophyta</taxon>
        <taxon>Embryophyta</taxon>
        <taxon>Tracheophyta</taxon>
        <taxon>Spermatophyta</taxon>
        <taxon>Magnoliopsida</taxon>
        <taxon>eudicotyledons</taxon>
        <taxon>Gunneridae</taxon>
        <taxon>Pentapetalae</taxon>
        <taxon>rosids</taxon>
        <taxon>malvids</taxon>
        <taxon>Brassicales</taxon>
        <taxon>Brassicaceae</taxon>
        <taxon>Camelineae</taxon>
        <taxon>Arabidopsis</taxon>
    </lineage>
</organism>
<feature type="chain" id="PRO_0000425818" description="Patatin-like protein 6">
    <location>
        <begin position="1"/>
        <end position="499"/>
    </location>
</feature>
<feature type="domain" description="PNPLA" evidence="3">
    <location>
        <begin position="111"/>
        <end position="314"/>
    </location>
</feature>
<feature type="short sequence motif" description="GGXR">
    <location>
        <begin position="116"/>
        <end position="119"/>
    </location>
</feature>
<feature type="short sequence motif" description="DGA/G" evidence="3">
    <location>
        <begin position="301"/>
        <end position="303"/>
    </location>
</feature>
<feature type="active site" description="Nucleophile" evidence="2">
    <location>
        <position position="155"/>
    </location>
</feature>
<feature type="active site" description="Proton acceptor" evidence="1">
    <location>
        <position position="301"/>
    </location>
</feature>
<sequence>MLTTMQRVHNKPIDSIGGFKHLVKQSNGGDGGVTATDMQEPSIETDKLSYEIFSILESKFLFGYDDDLKLMESRSRDPSPEQETASPAMVEALNGVVPGTVKNQRGKVCVLSIDSGGMRGIIPGKALAYLEHALKSKSGDPNARIADYFDVASGSGIGGIFTAMLFASSDGNRPIFKAEDTWRFLAMKGKSFYNKSPPGILNRVMKTGSGGSGGSGSKLEKAMKESFEELTLKDTLKPVLIPCYDLTSSAPFLFSRADALETDGYDFKLWEVCRATWAEPGVFEPVEMRSVDGKTRCVAVDGGLAMSNPTAAAITHVLHNKQEFPFVRGVEDLLVLSLGTGQLVDVKYDCDKVMKWKAKHWARPAVRISADGAADTVDQAVSMAFGQCRRSNYVRIQANGSSFGPCKPNIDTDASPSNVNMLVGVAEEMLKQKNAESVLFGGKKINEESNYEKLDWLAGELVLEHQRRSCRIAPTVAFKQSGDRRVDQQTIFKDIDCMF</sequence>
<keyword id="KW-0378">Hydrolase</keyword>
<keyword id="KW-0442">Lipid degradation</keyword>
<keyword id="KW-0443">Lipid metabolism</keyword>
<keyword id="KW-0611">Plant defense</keyword>
<keyword id="KW-1185">Reference proteome</keyword>
<evidence type="ECO:0000250" key="1"/>
<evidence type="ECO:0000255" key="2"/>
<evidence type="ECO:0000255" key="3">
    <source>
        <dbReference type="PROSITE-ProRule" id="PRU01161"/>
    </source>
</evidence>
<evidence type="ECO:0000269" key="4">
    <source>
    </source>
</evidence>
<evidence type="ECO:0000305" key="5"/>
<dbReference type="EC" id="3.1.1.-"/>
<dbReference type="EMBL" id="AC004697">
    <property type="protein sequence ID" value="AAC28986.1"/>
    <property type="molecule type" value="Genomic_DNA"/>
</dbReference>
<dbReference type="EMBL" id="CP002685">
    <property type="protein sequence ID" value="AEC09647.1"/>
    <property type="molecule type" value="Genomic_DNA"/>
</dbReference>
<dbReference type="EMBL" id="AY062648">
    <property type="protein sequence ID" value="AAL32726.1"/>
    <property type="molecule type" value="mRNA"/>
</dbReference>
<dbReference type="EMBL" id="BT000763">
    <property type="protein sequence ID" value="AAN31902.1"/>
    <property type="molecule type" value="mRNA"/>
</dbReference>
<dbReference type="EMBL" id="BT008869">
    <property type="protein sequence ID" value="AAP68308.1"/>
    <property type="molecule type" value="mRNA"/>
</dbReference>
<dbReference type="PIR" id="T02580">
    <property type="entry name" value="T02580"/>
</dbReference>
<dbReference type="RefSeq" id="NP_181455.1">
    <property type="nucleotide sequence ID" value="NM_129480.3"/>
</dbReference>
<dbReference type="SMR" id="O80959"/>
<dbReference type="BioGRID" id="3845">
    <property type="interactions" value="1"/>
</dbReference>
<dbReference type="FunCoup" id="O80959">
    <property type="interactions" value="167"/>
</dbReference>
<dbReference type="IntAct" id="O80959">
    <property type="interactions" value="1"/>
</dbReference>
<dbReference type="STRING" id="3702.O80959"/>
<dbReference type="GlyGen" id="O80959">
    <property type="glycosylation" value="1 site"/>
</dbReference>
<dbReference type="iPTMnet" id="O80959"/>
<dbReference type="PaxDb" id="3702-AT2G39220.1"/>
<dbReference type="ProteomicsDB" id="236638"/>
<dbReference type="EnsemblPlants" id="AT2G39220.1">
    <property type="protein sequence ID" value="AT2G39220.1"/>
    <property type="gene ID" value="AT2G39220"/>
</dbReference>
<dbReference type="GeneID" id="818507"/>
<dbReference type="Gramene" id="AT2G39220.1">
    <property type="protein sequence ID" value="AT2G39220.1"/>
    <property type="gene ID" value="AT2G39220"/>
</dbReference>
<dbReference type="KEGG" id="ath:AT2G39220"/>
<dbReference type="Araport" id="AT2G39220"/>
<dbReference type="TAIR" id="AT2G39220">
    <property type="gene designation" value="PLP6"/>
</dbReference>
<dbReference type="eggNOG" id="KOG0513">
    <property type="taxonomic scope" value="Eukaryota"/>
</dbReference>
<dbReference type="HOGENOM" id="CLU_000288_144_1_1"/>
<dbReference type="InParanoid" id="O80959"/>
<dbReference type="OMA" id="RSEMQEP"/>
<dbReference type="PhylomeDB" id="O80959"/>
<dbReference type="BRENDA" id="3.1.1.23">
    <property type="organism ID" value="399"/>
</dbReference>
<dbReference type="PRO" id="PR:O80959"/>
<dbReference type="Proteomes" id="UP000006548">
    <property type="component" value="Chromosome 2"/>
</dbReference>
<dbReference type="ExpressionAtlas" id="O80959">
    <property type="expression patterns" value="baseline and differential"/>
</dbReference>
<dbReference type="GO" id="GO:0005886">
    <property type="term" value="C:plasma membrane"/>
    <property type="evidence" value="ECO:0000314"/>
    <property type="project" value="TAIR"/>
</dbReference>
<dbReference type="GO" id="GO:0016787">
    <property type="term" value="F:hydrolase activity"/>
    <property type="evidence" value="ECO:0000314"/>
    <property type="project" value="TAIR"/>
</dbReference>
<dbReference type="GO" id="GO:0016298">
    <property type="term" value="F:lipase activity"/>
    <property type="evidence" value="ECO:0000314"/>
    <property type="project" value="TAIR"/>
</dbReference>
<dbReference type="GO" id="GO:0004620">
    <property type="term" value="F:phospholipase activity"/>
    <property type="evidence" value="ECO:0000314"/>
    <property type="project" value="TAIR"/>
</dbReference>
<dbReference type="GO" id="GO:0006952">
    <property type="term" value="P:defense response"/>
    <property type="evidence" value="ECO:0007669"/>
    <property type="project" value="UniProtKB-KW"/>
</dbReference>
<dbReference type="GO" id="GO:0016042">
    <property type="term" value="P:lipid catabolic process"/>
    <property type="evidence" value="ECO:0007669"/>
    <property type="project" value="UniProtKB-KW"/>
</dbReference>
<dbReference type="CDD" id="cd07199">
    <property type="entry name" value="Pat17_PNPLA8_PNPLA9_like"/>
    <property type="match status" value="1"/>
</dbReference>
<dbReference type="Gene3D" id="3.40.1090.10">
    <property type="entry name" value="Cytosolic phospholipase A2 catalytic domain"/>
    <property type="match status" value="1"/>
</dbReference>
<dbReference type="InterPro" id="IPR016035">
    <property type="entry name" value="Acyl_Trfase/lysoPLipase"/>
</dbReference>
<dbReference type="InterPro" id="IPR002641">
    <property type="entry name" value="PNPLA_dom"/>
</dbReference>
<dbReference type="PANTHER" id="PTHR32241">
    <property type="entry name" value="PATATIN-LIKE PROTEIN 6"/>
    <property type="match status" value="1"/>
</dbReference>
<dbReference type="PANTHER" id="PTHR32241:SF3">
    <property type="entry name" value="PATATIN-LIKE PROTEIN 6"/>
    <property type="match status" value="1"/>
</dbReference>
<dbReference type="Pfam" id="PF01734">
    <property type="entry name" value="Patatin"/>
    <property type="match status" value="1"/>
</dbReference>
<dbReference type="SUPFAM" id="SSF52151">
    <property type="entry name" value="FabD/lysophospholipase-like"/>
    <property type="match status" value="1"/>
</dbReference>
<dbReference type="PROSITE" id="PS51635">
    <property type="entry name" value="PNPLA"/>
    <property type="match status" value="1"/>
</dbReference>
<proteinExistence type="evidence at protein level"/>
<protein>
    <recommendedName>
        <fullName>Patatin-like protein 6</fullName>
        <shortName>AtPLP6</shortName>
        <ecNumber>3.1.1.-</ecNumber>
    </recommendedName>
    <alternativeName>
        <fullName>Patatin-related phospholipase A IIIalpha</fullName>
        <shortName>pPLAIIIa</shortName>
    </alternativeName>
    <alternativeName>
        <fullName>Phospholipase A IIB</fullName>
        <shortName>AtPLAIIB</shortName>
    </alternativeName>
</protein>
<accession>O80959</accession>
<name>PLP6_ARATH</name>